<protein>
    <recommendedName>
        <fullName>Capsular polysaccharide phosphotransferase LcbA</fullName>
        <ecNumber>2.7.-.-</ecNumber>
    </recommendedName>
    <alternativeName>
        <fullName>Stealth protein LcbA</fullName>
    </alternativeName>
</protein>
<sequence length="366" mass="43281">MKRLKKLTREPGVFFRDYFNKKYPVRNIEQRINEIEEPAIIANSLHLAAVESAIHLSPFKIDVVFTWVDNSDTQWQQRHQQYCHAASPNNLYSNDETRFANHNELYYSLHSVRSFLPWVNHIYIITDSQTPKWFKSAEYPNVSIIDHSEIIDKQYLPTFNSHVIEAHLHNIPNLSEHFIYFNDDVFVARPLHREHFFHANGIASLFIADKSLQKMATKGTITPTLSASQNCIRLLNQRYDCNLDHPLVHTYVPLRKSGFQTAWQYYREEIKAFLPNKFRTNQDLNLATFLVPWLMYLDGKSIPNNDICYYFNIRSNKAPTQYLKLLQKNEDNQQPHSFCANDFHSEQQLYDYHAKLIAMLKDYFKI</sequence>
<organism>
    <name type="scientific">Neisseria meningitidis</name>
    <dbReference type="NCBI Taxonomy" id="487"/>
    <lineage>
        <taxon>Bacteria</taxon>
        <taxon>Pseudomonadati</taxon>
        <taxon>Pseudomonadota</taxon>
        <taxon>Betaproteobacteria</taxon>
        <taxon>Neisseriales</taxon>
        <taxon>Neisseriaceae</taxon>
        <taxon>Neisseria</taxon>
    </lineage>
</organism>
<accession>Q9RGR0</accession>
<keyword id="KW-0270">Exopolysaccharide synthesis</keyword>
<keyword id="KW-0808">Transferase</keyword>
<comment type="miscellaneous">
    <text>Stealth proteins are part of a protein family that is conserved from bacteria to higher eukaryotes. Family members were first identified in microbes as proteins that help pathogens to elude the host innate immune system. Microbial stealth proteins are involved in the biosynthesis of exopolysaccharides. Stealth proteins are predicted to function as hexose-1-phosphoryltransferases.</text>
</comment>
<comment type="similarity">
    <text evidence="1">Belongs to the stealth family.</text>
</comment>
<proteinExistence type="inferred from homology"/>
<feature type="chain" id="PRO_0000235956" description="Capsular polysaccharide phosphotransferase LcbA">
    <location>
        <begin position="1"/>
        <end position="366"/>
    </location>
</feature>
<name>LCBA_NEIME</name>
<reference key="1">
    <citation type="submission" date="1998-12" db="EMBL/GenBank/DDBJ databases">
        <title>Analysis of the region encoding the putative capsular biosynthetic genes of the Neisseria meningitidis serogroup L.</title>
        <authorList>
            <person name="Brewer N.E."/>
            <person name="Coulthart M.B."/>
            <person name="Tyler S.D."/>
        </authorList>
    </citation>
    <scope>NUCLEOTIDE SEQUENCE [GENOMIC DNA]</scope>
    <source>
        <strain>Serogroup L</strain>
    </source>
</reference>
<reference key="2">
    <citation type="journal article" date="2005" name="PLoS Comput. Biol.">
        <title>Stealth proteins: in silico identification of a novel protein family rendering bacterial pathogens invisible to host immune defense.</title>
        <authorList>
            <person name="Sperisen P."/>
            <person name="Schmid C.D."/>
            <person name="Bucher P."/>
            <person name="Zilian O."/>
        </authorList>
    </citation>
    <scope>IDENTIFICATION AS A STEALTH PROTEIN</scope>
    <scope>PREDICTION OF FUNCTION</scope>
</reference>
<gene>
    <name type="primary">lcbA</name>
</gene>
<evidence type="ECO:0000305" key="1"/>
<dbReference type="EC" id="2.7.-.-"/>
<dbReference type="EMBL" id="AF112478">
    <property type="protein sequence ID" value="AAF21950.1"/>
    <property type="molecule type" value="Genomic_DNA"/>
</dbReference>
<dbReference type="SMR" id="Q9RGR0"/>
<dbReference type="GO" id="GO:0016772">
    <property type="term" value="F:transferase activity, transferring phosphorus-containing groups"/>
    <property type="evidence" value="ECO:0007669"/>
    <property type="project" value="InterPro"/>
</dbReference>
<dbReference type="GO" id="GO:0000271">
    <property type="term" value="P:polysaccharide biosynthetic process"/>
    <property type="evidence" value="ECO:0007669"/>
    <property type="project" value="UniProtKB-KW"/>
</dbReference>
<dbReference type="InterPro" id="IPR047141">
    <property type="entry name" value="Stealth"/>
</dbReference>
<dbReference type="InterPro" id="IPR031358">
    <property type="entry name" value="Stealth_CR1"/>
</dbReference>
<dbReference type="InterPro" id="IPR021520">
    <property type="entry name" value="Stealth_CR2"/>
</dbReference>
<dbReference type="PANTHER" id="PTHR24045">
    <property type="match status" value="1"/>
</dbReference>
<dbReference type="PANTHER" id="PTHR24045:SF0">
    <property type="entry name" value="N-ACETYLGLUCOSAMINE-1-PHOSPHOTRANSFERASE SUBUNITS ALPHA_BETA"/>
    <property type="match status" value="1"/>
</dbReference>
<dbReference type="Pfam" id="PF17101">
    <property type="entry name" value="Stealth_CR1"/>
    <property type="match status" value="1"/>
</dbReference>
<dbReference type="Pfam" id="PF11380">
    <property type="entry name" value="Stealth_CR2"/>
    <property type="match status" value="1"/>
</dbReference>